<reference key="1">
    <citation type="journal article" date="2005" name="BMC Genomics">
        <title>Characterization of 954 bovine full-CDS cDNA sequences.</title>
        <authorList>
            <person name="Harhay G.P."/>
            <person name="Sonstegard T.S."/>
            <person name="Keele J.W."/>
            <person name="Heaton M.P."/>
            <person name="Clawson M.L."/>
            <person name="Snelling W.M."/>
            <person name="Wiedmann R.T."/>
            <person name="Van Tassell C.P."/>
            <person name="Smith T.P.L."/>
        </authorList>
    </citation>
    <scope>NUCLEOTIDE SEQUENCE [LARGE SCALE MRNA]</scope>
</reference>
<reference key="2">
    <citation type="submission" date="2006-04" db="EMBL/GenBank/DDBJ databases">
        <authorList>
            <consortium name="NIH - Mammalian Gene Collection (MGC) project"/>
        </authorList>
    </citation>
    <scope>NUCLEOTIDE SEQUENCE [LARGE SCALE MRNA]</scope>
    <source>
        <strain>Hereford</strain>
        <tissue>Thymus</tissue>
    </source>
</reference>
<evidence type="ECO:0000250" key="1">
    <source>
        <dbReference type="UniProtKB" id="Q6RFH5"/>
    </source>
</evidence>
<evidence type="ECO:0000256" key="2">
    <source>
        <dbReference type="SAM" id="MobiDB-lite"/>
    </source>
</evidence>
<evidence type="ECO:0000305" key="3"/>
<name>WDR74_BOVIN</name>
<protein>
    <recommendedName>
        <fullName>WD repeat-containing protein 74</fullName>
    </recommendedName>
</protein>
<gene>
    <name type="primary">WDR74</name>
</gene>
<feature type="chain" id="PRO_0000051427" description="WD repeat-containing protein 74">
    <location>
        <begin position="1"/>
        <end position="385"/>
    </location>
</feature>
<feature type="repeat" description="WD 1">
    <location>
        <begin position="40"/>
        <end position="80"/>
    </location>
</feature>
<feature type="repeat" description="WD 2">
    <location>
        <begin position="83"/>
        <end position="122"/>
    </location>
</feature>
<feature type="repeat" description="WD 3">
    <location>
        <begin position="128"/>
        <end position="168"/>
    </location>
</feature>
<feature type="repeat" description="WD 4">
    <location>
        <begin position="179"/>
        <end position="220"/>
    </location>
</feature>
<feature type="repeat" description="WD 5">
    <location>
        <begin position="224"/>
        <end position="266"/>
    </location>
</feature>
<feature type="repeat" description="WD 6">
    <location>
        <begin position="267"/>
        <end position="306"/>
    </location>
</feature>
<feature type="region of interest" description="Required for nucleolar and nuclear location" evidence="1">
    <location>
        <begin position="320"/>
        <end position="385"/>
    </location>
</feature>
<feature type="region of interest" description="Disordered" evidence="2">
    <location>
        <begin position="323"/>
        <end position="385"/>
    </location>
</feature>
<feature type="compositionally biased region" description="Basic residues" evidence="2">
    <location>
        <begin position="372"/>
        <end position="385"/>
    </location>
</feature>
<feature type="modified residue" description="Phosphoserine" evidence="1">
    <location>
        <position position="214"/>
    </location>
</feature>
<feature type="modified residue" description="N6-methyllysine" evidence="1">
    <location>
        <position position="311"/>
    </location>
</feature>
<feature type="sequence conflict" description="In Ref. 1; AAX46617/ABM06072." evidence="3" ref="1">
    <original>G</original>
    <variation>A</variation>
    <location>
        <position position="303"/>
    </location>
</feature>
<accession>Q58D06</accession>
<accession>A1L518</accession>
<accession>A4FUF4</accession>
<accession>Q0V8D2</accession>
<accession>Q1JPA8</accession>
<accession>Q1JPK8</accession>
<accession>Q58D27</accession>
<comment type="function">
    <text evidence="1">Regulatory protein of the MTREX-exosome complex involved in the synthesis of the 60S ribosomal subunit. Participates in an early cleavage of the pre-rRNA processing pathway in cooperation with NVL.</text>
</comment>
<comment type="subunit">
    <text evidence="1">Isoform 1 interacts (through WDR repeats) with NVL; the interaction is independent of RNA or pre-60S ribosome particles. Isoform 2 does not interact with NVL. Interacts with MTREX; the interaction dissociation in a late stage of rRNA synthesis is required for appropriate maturation of pre-60S particles and depends on the ATPase activity of NVL.</text>
</comment>
<comment type="subcellular location">
    <subcellularLocation>
        <location evidence="1">Nucleus</location>
        <location evidence="1">Nucleolus</location>
    </subcellularLocation>
    <subcellularLocation>
        <location evidence="1">Nucleus</location>
    </subcellularLocation>
    <text evidence="1">Nucleolar location depends on active PolI transcription of pre-rRNA.</text>
</comment>
<sequence length="385" mass="42498">MAAAAARWNHVWVGTDTGILKGVNLQRKQAANFTASGQPRREEAVSALCWGAGGETQILVGCADGTVKHFSTEEGRFQGQRQCPGGEGTFRGLAQVDGTLITCVDSGILRVWTDKDKEASSDPVLELRVGPGVCRMRQDPARPHIVATGGKENALKVWDLQGSEEPLFRAKNVRNDWLDLRVPVWDQDIQFLPESQKLVTCTGYHQVRVYDPASPQRRPVLEATYGEYPLTAVTLTPEGNSVIVGNTHGQLAEIDLRQGRLLGCLKGLAGSVRGLQCHPSKPLLASCGLDRVLRIHRIRNPRGLEHKVYLKSQLNCLLLSGRDNWEDEPQEPQEPNKVPSEDTETDELWASLEAAAKRKLPDWEQTQGALQARRRKKKRPGSTSS</sequence>
<proteinExistence type="evidence at transcript level"/>
<keyword id="KW-0488">Methylation</keyword>
<keyword id="KW-0539">Nucleus</keyword>
<keyword id="KW-0597">Phosphoprotein</keyword>
<keyword id="KW-1185">Reference proteome</keyword>
<keyword id="KW-0677">Repeat</keyword>
<keyword id="KW-0853">WD repeat</keyword>
<dbReference type="EMBL" id="BT021738">
    <property type="protein sequence ID" value="AAX46585.1"/>
    <property type="molecule type" value="mRNA"/>
</dbReference>
<dbReference type="EMBL" id="BT021770">
    <property type="protein sequence ID" value="AAX46617.1"/>
    <property type="molecule type" value="mRNA"/>
</dbReference>
<dbReference type="EMBL" id="BT021791">
    <property type="protein sequence ID" value="AAX46638.1"/>
    <property type="molecule type" value="mRNA"/>
</dbReference>
<dbReference type="EMBL" id="BT021906">
    <property type="protein sequence ID" value="AAX46753.1"/>
    <property type="molecule type" value="mRNA"/>
</dbReference>
<dbReference type="EMBL" id="BT025345">
    <property type="protein sequence ID" value="ABF57301.1"/>
    <property type="molecule type" value="mRNA"/>
</dbReference>
<dbReference type="EMBL" id="BT025445">
    <property type="protein sequence ID" value="ABF57401.1"/>
    <property type="molecule type" value="mRNA"/>
</dbReference>
<dbReference type="EMBL" id="BT026287">
    <property type="protein sequence ID" value="ABG81443.1"/>
    <property type="molecule type" value="mRNA"/>
</dbReference>
<dbReference type="EMBL" id="BT029805">
    <property type="protein sequence ID" value="ABM06072.1"/>
    <property type="molecule type" value="mRNA"/>
</dbReference>
<dbReference type="EMBL" id="BC114802">
    <property type="protein sequence ID" value="AAI14803.1"/>
    <property type="molecule type" value="mRNA"/>
</dbReference>
<dbReference type="RefSeq" id="NP_001014854.1">
    <property type="nucleotide sequence ID" value="NM_001014854.2"/>
</dbReference>
<dbReference type="RefSeq" id="XP_005226944.1">
    <property type="nucleotide sequence ID" value="XM_005226887.3"/>
</dbReference>
<dbReference type="SMR" id="Q58D06"/>
<dbReference type="FunCoup" id="Q58D06">
    <property type="interactions" value="3523"/>
</dbReference>
<dbReference type="STRING" id="9913.ENSBTAP00000012489"/>
<dbReference type="PaxDb" id="9913-ENSBTAP00000012489"/>
<dbReference type="GeneID" id="505875"/>
<dbReference type="KEGG" id="bta:505875"/>
<dbReference type="CTD" id="54663"/>
<dbReference type="VEuPathDB" id="HostDB:ENSBTAG00000009491"/>
<dbReference type="eggNOG" id="KOG3881">
    <property type="taxonomic scope" value="Eukaryota"/>
</dbReference>
<dbReference type="HOGENOM" id="CLU_033769_2_0_1"/>
<dbReference type="InParanoid" id="Q58D06"/>
<dbReference type="OMA" id="KNVCRMR"/>
<dbReference type="OrthoDB" id="18388at2759"/>
<dbReference type="TreeFam" id="TF314666"/>
<dbReference type="CD-CODE" id="D7FE2080">
    <property type="entry name" value="Nucleolus"/>
</dbReference>
<dbReference type="Proteomes" id="UP000009136">
    <property type="component" value="Chromosome 29"/>
</dbReference>
<dbReference type="Bgee" id="ENSBTAG00000009491">
    <property type="expression patterns" value="Expressed in digestive system secreted substance and 108 other cell types or tissues"/>
</dbReference>
<dbReference type="GO" id="GO:0005730">
    <property type="term" value="C:nucleolus"/>
    <property type="evidence" value="ECO:0000318"/>
    <property type="project" value="GO_Central"/>
</dbReference>
<dbReference type="GO" id="GO:0005634">
    <property type="term" value="C:nucleus"/>
    <property type="evidence" value="ECO:0000250"/>
    <property type="project" value="UniProtKB"/>
</dbReference>
<dbReference type="GO" id="GO:0030687">
    <property type="term" value="C:preribosome, large subunit precursor"/>
    <property type="evidence" value="ECO:0000318"/>
    <property type="project" value="GO_Central"/>
</dbReference>
<dbReference type="GO" id="GO:0001825">
    <property type="term" value="P:blastocyst formation"/>
    <property type="evidence" value="ECO:0000250"/>
    <property type="project" value="UniProtKB"/>
</dbReference>
<dbReference type="GO" id="GO:0042273">
    <property type="term" value="P:ribosomal large subunit biogenesis"/>
    <property type="evidence" value="ECO:0000250"/>
    <property type="project" value="UniProtKB"/>
</dbReference>
<dbReference type="GO" id="GO:0016070">
    <property type="term" value="P:RNA metabolic process"/>
    <property type="evidence" value="ECO:0000250"/>
    <property type="project" value="UniProtKB"/>
</dbReference>
<dbReference type="GO" id="GO:0006364">
    <property type="term" value="P:rRNA processing"/>
    <property type="evidence" value="ECO:0000250"/>
    <property type="project" value="UniProtKB"/>
</dbReference>
<dbReference type="CDD" id="cd22857">
    <property type="entry name" value="WDR74"/>
    <property type="match status" value="1"/>
</dbReference>
<dbReference type="FunFam" id="2.130.10.10:FF:000214">
    <property type="entry name" value="WD repeat-containing protein 74"/>
    <property type="match status" value="1"/>
</dbReference>
<dbReference type="FunFam" id="2.130.10.10:FF:000287">
    <property type="entry name" value="WD repeat-containing protein 74"/>
    <property type="match status" value="1"/>
</dbReference>
<dbReference type="Gene3D" id="2.130.10.10">
    <property type="entry name" value="YVTN repeat-like/Quinoprotein amine dehydrogenase"/>
    <property type="match status" value="2"/>
</dbReference>
<dbReference type="InterPro" id="IPR015943">
    <property type="entry name" value="WD40/YVTN_repeat-like_dom_sf"/>
</dbReference>
<dbReference type="InterPro" id="IPR036322">
    <property type="entry name" value="WD40_repeat_dom_sf"/>
</dbReference>
<dbReference type="InterPro" id="IPR001680">
    <property type="entry name" value="WD40_rpt"/>
</dbReference>
<dbReference type="InterPro" id="IPR037379">
    <property type="entry name" value="WDR74/Nsa1"/>
</dbReference>
<dbReference type="PANTHER" id="PTHR16038">
    <property type="entry name" value="NOP SEVEN ASSOCIATED PROTEIN 1"/>
    <property type="match status" value="1"/>
</dbReference>
<dbReference type="PANTHER" id="PTHR16038:SF4">
    <property type="entry name" value="WD REPEAT-CONTAINING PROTEIN 74"/>
    <property type="match status" value="1"/>
</dbReference>
<dbReference type="Pfam" id="PF00400">
    <property type="entry name" value="WD40"/>
    <property type="match status" value="1"/>
</dbReference>
<dbReference type="SMART" id="SM00320">
    <property type="entry name" value="WD40"/>
    <property type="match status" value="4"/>
</dbReference>
<dbReference type="SUPFAM" id="SSF50978">
    <property type="entry name" value="WD40 repeat-like"/>
    <property type="match status" value="1"/>
</dbReference>
<organism>
    <name type="scientific">Bos taurus</name>
    <name type="common">Bovine</name>
    <dbReference type="NCBI Taxonomy" id="9913"/>
    <lineage>
        <taxon>Eukaryota</taxon>
        <taxon>Metazoa</taxon>
        <taxon>Chordata</taxon>
        <taxon>Craniata</taxon>
        <taxon>Vertebrata</taxon>
        <taxon>Euteleostomi</taxon>
        <taxon>Mammalia</taxon>
        <taxon>Eutheria</taxon>
        <taxon>Laurasiatheria</taxon>
        <taxon>Artiodactyla</taxon>
        <taxon>Ruminantia</taxon>
        <taxon>Pecora</taxon>
        <taxon>Bovidae</taxon>
        <taxon>Bovinae</taxon>
        <taxon>Bos</taxon>
    </lineage>
</organism>